<feature type="chain" id="PRO_0000060447" description="tRNA (guanine-N(1)-)-methyltransferase">
    <location>
        <begin position="1"/>
        <end position="255"/>
    </location>
</feature>
<feature type="binding site" evidence="1">
    <location>
        <position position="113"/>
    </location>
    <ligand>
        <name>S-adenosyl-L-methionine</name>
        <dbReference type="ChEBI" id="CHEBI:59789"/>
    </ligand>
</feature>
<feature type="binding site" evidence="1">
    <location>
        <begin position="133"/>
        <end position="138"/>
    </location>
    <ligand>
        <name>S-adenosyl-L-methionine</name>
        <dbReference type="ChEBI" id="CHEBI:59789"/>
    </ligand>
</feature>
<keyword id="KW-0963">Cytoplasm</keyword>
<keyword id="KW-0489">Methyltransferase</keyword>
<keyword id="KW-0949">S-adenosyl-L-methionine</keyword>
<keyword id="KW-0808">Transferase</keyword>
<keyword id="KW-0819">tRNA processing</keyword>
<accession>Q57L31</accession>
<protein>
    <recommendedName>
        <fullName evidence="1">tRNA (guanine-N(1)-)-methyltransferase</fullName>
        <ecNumber evidence="1">2.1.1.228</ecNumber>
    </recommendedName>
    <alternativeName>
        <fullName evidence="1">M1G-methyltransferase</fullName>
    </alternativeName>
    <alternativeName>
        <fullName evidence="1">tRNA [GM37] methyltransferase</fullName>
    </alternativeName>
</protein>
<organism>
    <name type="scientific">Salmonella choleraesuis (strain SC-B67)</name>
    <dbReference type="NCBI Taxonomy" id="321314"/>
    <lineage>
        <taxon>Bacteria</taxon>
        <taxon>Pseudomonadati</taxon>
        <taxon>Pseudomonadota</taxon>
        <taxon>Gammaproteobacteria</taxon>
        <taxon>Enterobacterales</taxon>
        <taxon>Enterobacteriaceae</taxon>
        <taxon>Salmonella</taxon>
    </lineage>
</organism>
<gene>
    <name evidence="1" type="primary">trmD</name>
    <name type="ordered locus">SCH_2675</name>
</gene>
<sequence length="255" mass="28364">MFIGIVSLFPEMFRAITDYGVTGRAVKNGLLNIQSWSPRDFTHDRHRTVDDRPYGGGPGMLMMVQPLRDAIHAAKAAAGEGAKVIYLSPQGRKLDQAGVSELATNQKLILVCGRYEGVDERVIQTEIDEEWSIGDYVLSGGELPAMTLIDSVARFIPGVLGHEASAIEDSFADGLLDCPHYTRPEVLEGMEVPPVLLSGNHAEIRRWRLKQSLGRTWLRRPELLENLALTEEQARLLAEFKTEHAQQQHKHDGMA</sequence>
<name>TRMD_SALCH</name>
<comment type="function">
    <text evidence="1">Specifically methylates guanosine-37 in various tRNAs.</text>
</comment>
<comment type="catalytic activity">
    <reaction evidence="1">
        <text>guanosine(37) in tRNA + S-adenosyl-L-methionine = N(1)-methylguanosine(37) in tRNA + S-adenosyl-L-homocysteine + H(+)</text>
        <dbReference type="Rhea" id="RHEA:36899"/>
        <dbReference type="Rhea" id="RHEA-COMP:10145"/>
        <dbReference type="Rhea" id="RHEA-COMP:10147"/>
        <dbReference type="ChEBI" id="CHEBI:15378"/>
        <dbReference type="ChEBI" id="CHEBI:57856"/>
        <dbReference type="ChEBI" id="CHEBI:59789"/>
        <dbReference type="ChEBI" id="CHEBI:73542"/>
        <dbReference type="ChEBI" id="CHEBI:74269"/>
        <dbReference type="EC" id="2.1.1.228"/>
    </reaction>
</comment>
<comment type="subunit">
    <text evidence="1">Homodimer.</text>
</comment>
<comment type="subcellular location">
    <subcellularLocation>
        <location evidence="1">Cytoplasm</location>
    </subcellularLocation>
</comment>
<comment type="similarity">
    <text evidence="1">Belongs to the RNA methyltransferase TrmD family.</text>
</comment>
<dbReference type="EC" id="2.1.1.228" evidence="1"/>
<dbReference type="EMBL" id="AE017220">
    <property type="protein sequence ID" value="AAX66581.1"/>
    <property type="molecule type" value="Genomic_DNA"/>
</dbReference>
<dbReference type="RefSeq" id="WP_000469813.1">
    <property type="nucleotide sequence ID" value="NC_006905.1"/>
</dbReference>
<dbReference type="SMR" id="Q57L31"/>
<dbReference type="KEGG" id="sec:SCH_2675"/>
<dbReference type="HOGENOM" id="CLU_047363_0_1_6"/>
<dbReference type="Proteomes" id="UP000000538">
    <property type="component" value="Chromosome"/>
</dbReference>
<dbReference type="GO" id="GO:0005829">
    <property type="term" value="C:cytosol"/>
    <property type="evidence" value="ECO:0007669"/>
    <property type="project" value="TreeGrafter"/>
</dbReference>
<dbReference type="GO" id="GO:0052906">
    <property type="term" value="F:tRNA (guanine(37)-N1)-methyltransferase activity"/>
    <property type="evidence" value="ECO:0007669"/>
    <property type="project" value="UniProtKB-UniRule"/>
</dbReference>
<dbReference type="GO" id="GO:0002939">
    <property type="term" value="P:tRNA N1-guanine methylation"/>
    <property type="evidence" value="ECO:0007669"/>
    <property type="project" value="TreeGrafter"/>
</dbReference>
<dbReference type="CDD" id="cd18080">
    <property type="entry name" value="TrmD-like"/>
    <property type="match status" value="1"/>
</dbReference>
<dbReference type="FunFam" id="1.10.1270.20:FF:000001">
    <property type="entry name" value="tRNA (guanine-N(1)-)-methyltransferase"/>
    <property type="match status" value="1"/>
</dbReference>
<dbReference type="FunFam" id="3.40.1280.10:FF:000001">
    <property type="entry name" value="tRNA (guanine-N(1)-)-methyltransferase"/>
    <property type="match status" value="1"/>
</dbReference>
<dbReference type="Gene3D" id="3.40.1280.10">
    <property type="match status" value="1"/>
</dbReference>
<dbReference type="Gene3D" id="1.10.1270.20">
    <property type="entry name" value="tRNA(m1g37)methyltransferase, domain 2"/>
    <property type="match status" value="1"/>
</dbReference>
<dbReference type="HAMAP" id="MF_00605">
    <property type="entry name" value="TrmD"/>
    <property type="match status" value="1"/>
</dbReference>
<dbReference type="InterPro" id="IPR029028">
    <property type="entry name" value="Alpha/beta_knot_MTases"/>
</dbReference>
<dbReference type="InterPro" id="IPR023148">
    <property type="entry name" value="tRNA_m1G_MeTrfase_C_sf"/>
</dbReference>
<dbReference type="InterPro" id="IPR002649">
    <property type="entry name" value="tRNA_m1G_MeTrfase_TrmD"/>
</dbReference>
<dbReference type="InterPro" id="IPR029026">
    <property type="entry name" value="tRNA_m1G_MTases_N"/>
</dbReference>
<dbReference type="InterPro" id="IPR016009">
    <property type="entry name" value="tRNA_MeTrfase_TRMD/TRM10"/>
</dbReference>
<dbReference type="NCBIfam" id="NF000648">
    <property type="entry name" value="PRK00026.1"/>
    <property type="match status" value="1"/>
</dbReference>
<dbReference type="NCBIfam" id="TIGR00088">
    <property type="entry name" value="trmD"/>
    <property type="match status" value="1"/>
</dbReference>
<dbReference type="PANTHER" id="PTHR46417">
    <property type="entry name" value="TRNA (GUANINE-N(1)-)-METHYLTRANSFERASE"/>
    <property type="match status" value="1"/>
</dbReference>
<dbReference type="PANTHER" id="PTHR46417:SF1">
    <property type="entry name" value="TRNA (GUANINE-N(1)-)-METHYLTRANSFERASE"/>
    <property type="match status" value="1"/>
</dbReference>
<dbReference type="Pfam" id="PF01746">
    <property type="entry name" value="tRNA_m1G_MT"/>
    <property type="match status" value="1"/>
</dbReference>
<dbReference type="PIRSF" id="PIRSF000386">
    <property type="entry name" value="tRNA_mtase"/>
    <property type="match status" value="1"/>
</dbReference>
<dbReference type="SUPFAM" id="SSF75217">
    <property type="entry name" value="alpha/beta knot"/>
    <property type="match status" value="1"/>
</dbReference>
<proteinExistence type="inferred from homology"/>
<reference key="1">
    <citation type="journal article" date="2005" name="Nucleic Acids Res.">
        <title>The genome sequence of Salmonella enterica serovar Choleraesuis, a highly invasive and resistant zoonotic pathogen.</title>
        <authorList>
            <person name="Chiu C.-H."/>
            <person name="Tang P."/>
            <person name="Chu C."/>
            <person name="Hu S."/>
            <person name="Bao Q."/>
            <person name="Yu J."/>
            <person name="Chou Y.-Y."/>
            <person name="Wang H.-S."/>
            <person name="Lee Y.-S."/>
        </authorList>
    </citation>
    <scope>NUCLEOTIDE SEQUENCE [LARGE SCALE GENOMIC DNA]</scope>
    <source>
        <strain>SC-B67</strain>
    </source>
</reference>
<evidence type="ECO:0000255" key="1">
    <source>
        <dbReference type="HAMAP-Rule" id="MF_00605"/>
    </source>
</evidence>